<dbReference type="EC" id="6.3.2.1"/>
<dbReference type="EMBL" id="Y10253">
    <property type="protein sequence ID" value="CAA71303.1"/>
    <property type="status" value="ALT_SEQ"/>
    <property type="molecule type" value="mRNA"/>
</dbReference>
<dbReference type="EMBL" id="AC096688">
    <property type="protein sequence ID" value="AAO20059.1"/>
    <property type="molecule type" value="Genomic_DNA"/>
</dbReference>
<dbReference type="EMBL" id="DP000009">
    <property type="protein sequence ID" value="ABF99935.1"/>
    <property type="molecule type" value="Genomic_DNA"/>
</dbReference>
<dbReference type="EMBL" id="AP008209">
    <property type="protein sequence ID" value="BAF13832.1"/>
    <property type="molecule type" value="Genomic_DNA"/>
</dbReference>
<dbReference type="EMBL" id="AP014959">
    <property type="protein sequence ID" value="BAS87394.1"/>
    <property type="molecule type" value="Genomic_DNA"/>
</dbReference>
<dbReference type="EMBL" id="AK066656">
    <property type="protein sequence ID" value="BAG90070.1"/>
    <property type="molecule type" value="mRNA"/>
</dbReference>
<dbReference type="PIR" id="T03924">
    <property type="entry name" value="T03924"/>
</dbReference>
<dbReference type="SMR" id="O24210"/>
<dbReference type="FunCoup" id="O24210">
    <property type="interactions" value="317"/>
</dbReference>
<dbReference type="STRING" id="39947.O24210"/>
<dbReference type="PaxDb" id="39947-O24210"/>
<dbReference type="EnsemblPlants" id="Os03t0851800-01">
    <property type="protein sequence ID" value="Os03t0851800-01"/>
    <property type="gene ID" value="Os03g0851800"/>
</dbReference>
<dbReference type="Gramene" id="Os03t0851800-01">
    <property type="protein sequence ID" value="Os03t0851800-01"/>
    <property type="gene ID" value="Os03g0851800"/>
</dbReference>
<dbReference type="KEGG" id="dosa:Os03g0851800"/>
<dbReference type="eggNOG" id="KOG3042">
    <property type="taxonomic scope" value="Eukaryota"/>
</dbReference>
<dbReference type="InParanoid" id="O24210"/>
<dbReference type="OMA" id="CNHKLEP"/>
<dbReference type="BRENDA" id="6.3.2.1">
    <property type="organism ID" value="4460"/>
</dbReference>
<dbReference type="PlantReactome" id="R-OSA-1119394">
    <property type="pathway name" value="Pantothenate and coenzyme A biosynthesis III"/>
</dbReference>
<dbReference type="PlantReactome" id="R-OSA-1119496">
    <property type="pathway name" value="Pantothenate biosynthesis I"/>
</dbReference>
<dbReference type="PlantReactome" id="R-OSA-1119544">
    <property type="pathway name" value="Pantothenate biosynthesis II"/>
</dbReference>
<dbReference type="PlantReactome" id="R-OSA-1119568">
    <property type="pathway name" value="Pantothenate biosynthesis III"/>
</dbReference>
<dbReference type="UniPathway" id="UPA00028">
    <property type="reaction ID" value="UER00005"/>
</dbReference>
<dbReference type="Proteomes" id="UP000000763">
    <property type="component" value="Chromosome 3"/>
</dbReference>
<dbReference type="Proteomes" id="UP000059680">
    <property type="component" value="Chromosome 3"/>
</dbReference>
<dbReference type="ExpressionAtlas" id="O24210">
    <property type="expression patterns" value="baseline and differential"/>
</dbReference>
<dbReference type="GO" id="GO:0005829">
    <property type="term" value="C:cytosol"/>
    <property type="evidence" value="ECO:0000318"/>
    <property type="project" value="GO_Central"/>
</dbReference>
<dbReference type="GO" id="GO:0005524">
    <property type="term" value="F:ATP binding"/>
    <property type="evidence" value="ECO:0007669"/>
    <property type="project" value="UniProtKB-KW"/>
</dbReference>
<dbReference type="GO" id="GO:0004592">
    <property type="term" value="F:pantoate-beta-alanine ligase activity"/>
    <property type="evidence" value="ECO:0000318"/>
    <property type="project" value="GO_Central"/>
</dbReference>
<dbReference type="GO" id="GO:0015940">
    <property type="term" value="P:pantothenate biosynthetic process"/>
    <property type="evidence" value="ECO:0000318"/>
    <property type="project" value="GO_Central"/>
</dbReference>
<dbReference type="CDD" id="cd00560">
    <property type="entry name" value="PanC"/>
    <property type="match status" value="1"/>
</dbReference>
<dbReference type="FunFam" id="3.40.50.620:FF:000160">
    <property type="entry name" value="Pantoate--beta-alanine ligase"/>
    <property type="match status" value="1"/>
</dbReference>
<dbReference type="FunFam" id="3.30.1300.10:FF:000001">
    <property type="entry name" value="Pantothenate synthetase"/>
    <property type="match status" value="1"/>
</dbReference>
<dbReference type="Gene3D" id="3.40.50.620">
    <property type="entry name" value="HUPs"/>
    <property type="match status" value="1"/>
</dbReference>
<dbReference type="Gene3D" id="3.30.1300.10">
    <property type="entry name" value="Pantoate-beta-alanine ligase, C-terminal domain"/>
    <property type="match status" value="1"/>
</dbReference>
<dbReference type="HAMAP" id="MF_00158">
    <property type="entry name" value="PanC"/>
    <property type="match status" value="1"/>
</dbReference>
<dbReference type="InterPro" id="IPR003721">
    <property type="entry name" value="Pantoate_ligase"/>
</dbReference>
<dbReference type="InterPro" id="IPR042176">
    <property type="entry name" value="Pantoate_ligase_C"/>
</dbReference>
<dbReference type="InterPro" id="IPR014729">
    <property type="entry name" value="Rossmann-like_a/b/a_fold"/>
</dbReference>
<dbReference type="NCBIfam" id="TIGR00018">
    <property type="entry name" value="panC"/>
    <property type="match status" value="1"/>
</dbReference>
<dbReference type="PANTHER" id="PTHR21299">
    <property type="entry name" value="CYTIDYLATE KINASE/PANTOATE-BETA-ALANINE LIGASE"/>
    <property type="match status" value="1"/>
</dbReference>
<dbReference type="PANTHER" id="PTHR21299:SF1">
    <property type="entry name" value="PANTOATE--BETA-ALANINE LIGASE"/>
    <property type="match status" value="1"/>
</dbReference>
<dbReference type="Pfam" id="PF02569">
    <property type="entry name" value="Pantoate_ligase"/>
    <property type="match status" value="1"/>
</dbReference>
<dbReference type="SUPFAM" id="SSF52374">
    <property type="entry name" value="Nucleotidylyl transferase"/>
    <property type="match status" value="1"/>
</dbReference>
<gene>
    <name type="primary">PANC</name>
    <name type="ordered locus">Os03g0851800</name>
    <name type="ordered locus">LOC_Os03g63490</name>
    <name type="ORF">OSJNBa0015N08.21</name>
</gene>
<protein>
    <recommendedName>
        <fullName>Pantoate--beta-alanine ligase</fullName>
        <ecNumber>6.3.2.1</ecNumber>
    </recommendedName>
    <alternativeName>
        <fullName>Pantoate-activating enzyme</fullName>
    </alternativeName>
    <alternativeName>
        <fullName>Pantothenate synthetase</fullName>
    </alternativeName>
</protein>
<name>PANC_ORYSJ</name>
<feature type="chain" id="PRO_0000128300" description="Pantoate--beta-alanine ligase">
    <location>
        <begin position="1"/>
        <end position="313"/>
    </location>
</feature>
<feature type="active site" description="Proton donor" evidence="1">
    <location>
        <position position="43"/>
    </location>
</feature>
<feature type="binding site" evidence="1">
    <location>
        <begin position="36"/>
        <end position="43"/>
    </location>
    <ligand>
        <name>ATP</name>
        <dbReference type="ChEBI" id="CHEBI:30616"/>
    </ligand>
</feature>
<feature type="binding site" evidence="1">
    <location>
        <position position="71"/>
    </location>
    <ligand>
        <name>(R)-pantoate</name>
        <dbReference type="ChEBI" id="CHEBI:15980"/>
    </ligand>
</feature>
<feature type="binding site" evidence="1">
    <location>
        <position position="71"/>
    </location>
    <ligand>
        <name>beta-alanine</name>
        <dbReference type="ChEBI" id="CHEBI:57966"/>
    </ligand>
</feature>
<feature type="binding site" evidence="1">
    <location>
        <begin position="178"/>
        <end position="181"/>
    </location>
    <ligand>
        <name>ATP</name>
        <dbReference type="ChEBI" id="CHEBI:30616"/>
    </ligand>
</feature>
<feature type="binding site" evidence="1">
    <location>
        <position position="184"/>
    </location>
    <ligand>
        <name>(R)-pantoate</name>
        <dbReference type="ChEBI" id="CHEBI:15980"/>
    </ligand>
</feature>
<feature type="binding site" evidence="1">
    <location>
        <begin position="215"/>
        <end position="218"/>
    </location>
    <ligand>
        <name>ATP</name>
        <dbReference type="ChEBI" id="CHEBI:30616"/>
    </ligand>
</feature>
<accession>O24210</accession>
<accession>A0A0P0W5L1</accession>
<accession>Q10AH8</accession>
<accession>Q851Y0</accession>
<keyword id="KW-0067">ATP-binding</keyword>
<keyword id="KW-0963">Cytoplasm</keyword>
<keyword id="KW-0436">Ligase</keyword>
<keyword id="KW-0547">Nucleotide-binding</keyword>
<keyword id="KW-0566">Pantothenate biosynthesis</keyword>
<keyword id="KW-1185">Reference proteome</keyword>
<comment type="function">
    <text evidence="3">Catalyzes the condensation of pantoate with beta-alanine to form pantothenate. Essential for panthotenate biosynthesis (Probable).</text>
</comment>
<comment type="catalytic activity">
    <reaction>
        <text>(R)-pantoate + beta-alanine + ATP = (R)-pantothenate + AMP + diphosphate + H(+)</text>
        <dbReference type="Rhea" id="RHEA:10912"/>
        <dbReference type="ChEBI" id="CHEBI:15378"/>
        <dbReference type="ChEBI" id="CHEBI:15980"/>
        <dbReference type="ChEBI" id="CHEBI:29032"/>
        <dbReference type="ChEBI" id="CHEBI:30616"/>
        <dbReference type="ChEBI" id="CHEBI:33019"/>
        <dbReference type="ChEBI" id="CHEBI:57966"/>
        <dbReference type="ChEBI" id="CHEBI:456215"/>
        <dbReference type="EC" id="6.3.2.1"/>
    </reaction>
</comment>
<comment type="pathway">
    <text>Cofactor biosynthesis; (R)-pantothenate biosynthesis; (R)-pantothenate from (R)-pantoate and beta-alanine: step 1/1.</text>
</comment>
<comment type="subunit">
    <text evidence="1">Homodimer.</text>
</comment>
<comment type="subcellular location">
    <subcellularLocation>
        <location evidence="1">Cytoplasm</location>
        <location evidence="1">Cytosol</location>
    </subcellularLocation>
</comment>
<comment type="similarity">
    <text evidence="2">Belongs to the pantothenate synthetase family.</text>
</comment>
<comment type="sequence caution" evidence="2">
    <conflict type="frameshift">
        <sequence resource="EMBL-CDS" id="CAA71303"/>
    </conflict>
</comment>
<comment type="sequence caution" evidence="2">
    <conflict type="miscellaneous discrepancy">
        <sequence resource="EMBL-CDS" id="CAA71303"/>
    </conflict>
    <text>Sequencing errors.</text>
</comment>
<proteinExistence type="evidence at transcript level"/>
<reference key="1">
    <citation type="journal article" date="1999" name="Biochem. J.">
        <title>The final step of pantothenate biosynthesis in higher plants: cloning and characterization of pantothenate synthetase from Lotus japonicus and Oryza sativum (rice).</title>
        <authorList>
            <person name="Genschel U."/>
            <person name="Powell C.A."/>
            <person name="Abell C."/>
            <person name="Smith A.G."/>
        </authorList>
    </citation>
    <scope>NUCLEOTIDE SEQUENCE [MRNA]</scope>
    <scope>FUNCTION</scope>
    <source>
        <strain>cv. Nipponbare</strain>
        <tissue>Seedling root</tissue>
    </source>
</reference>
<reference key="2">
    <citation type="journal article" date="2005" name="Genome Res.">
        <title>Sequence, annotation, and analysis of synteny between rice chromosome 3 and diverged grass species.</title>
        <authorList>
            <consortium name="The rice chromosome 3 sequencing consortium"/>
            <person name="Buell C.R."/>
            <person name="Yuan Q."/>
            <person name="Ouyang S."/>
            <person name="Liu J."/>
            <person name="Zhu W."/>
            <person name="Wang A."/>
            <person name="Maiti R."/>
            <person name="Haas B."/>
            <person name="Wortman J."/>
            <person name="Pertea M."/>
            <person name="Jones K.M."/>
            <person name="Kim M."/>
            <person name="Overton L."/>
            <person name="Tsitrin T."/>
            <person name="Fadrosh D."/>
            <person name="Bera J."/>
            <person name="Weaver B."/>
            <person name="Jin S."/>
            <person name="Johri S."/>
            <person name="Reardon M."/>
            <person name="Webb K."/>
            <person name="Hill J."/>
            <person name="Moffat K."/>
            <person name="Tallon L."/>
            <person name="Van Aken S."/>
            <person name="Lewis M."/>
            <person name="Utterback T."/>
            <person name="Feldblyum T."/>
            <person name="Zismann V."/>
            <person name="Iobst S."/>
            <person name="Hsiao J."/>
            <person name="de Vazeille A.R."/>
            <person name="Salzberg S.L."/>
            <person name="White O."/>
            <person name="Fraser C.M."/>
            <person name="Yu Y."/>
            <person name="Kim H."/>
            <person name="Rambo T."/>
            <person name="Currie J."/>
            <person name="Collura K."/>
            <person name="Kernodle-Thompson S."/>
            <person name="Wei F."/>
            <person name="Kudrna K."/>
            <person name="Ammiraju J.S.S."/>
            <person name="Luo M."/>
            <person name="Goicoechea J.L."/>
            <person name="Wing R.A."/>
            <person name="Henry D."/>
            <person name="Oates R."/>
            <person name="Palmer M."/>
            <person name="Pries G."/>
            <person name="Saski C."/>
            <person name="Simmons J."/>
            <person name="Soderlund C."/>
            <person name="Nelson W."/>
            <person name="de la Bastide M."/>
            <person name="Spiegel L."/>
            <person name="Nascimento L."/>
            <person name="Huang E."/>
            <person name="Preston R."/>
            <person name="Zutavern T."/>
            <person name="Palmer L."/>
            <person name="O'Shaughnessy A."/>
            <person name="Dike S."/>
            <person name="McCombie W.R."/>
            <person name="Minx P."/>
            <person name="Cordum H."/>
            <person name="Wilson R."/>
            <person name="Jin W."/>
            <person name="Lee H.R."/>
            <person name="Jiang J."/>
            <person name="Jackson S."/>
        </authorList>
    </citation>
    <scope>NUCLEOTIDE SEQUENCE [LARGE SCALE GENOMIC DNA]</scope>
    <source>
        <strain>cv. Nipponbare</strain>
    </source>
</reference>
<reference key="3">
    <citation type="journal article" date="2005" name="Nature">
        <title>The map-based sequence of the rice genome.</title>
        <authorList>
            <consortium name="International rice genome sequencing project (IRGSP)"/>
        </authorList>
    </citation>
    <scope>NUCLEOTIDE SEQUENCE [LARGE SCALE GENOMIC DNA]</scope>
    <source>
        <strain>cv. Nipponbare</strain>
    </source>
</reference>
<reference key="4">
    <citation type="journal article" date="2008" name="Nucleic Acids Res.">
        <title>The rice annotation project database (RAP-DB): 2008 update.</title>
        <authorList>
            <consortium name="The rice annotation project (RAP)"/>
        </authorList>
    </citation>
    <scope>GENOME REANNOTATION</scope>
    <source>
        <strain>cv. Nipponbare</strain>
    </source>
</reference>
<reference key="5">
    <citation type="journal article" date="2013" name="Rice">
        <title>Improvement of the Oryza sativa Nipponbare reference genome using next generation sequence and optical map data.</title>
        <authorList>
            <person name="Kawahara Y."/>
            <person name="de la Bastide M."/>
            <person name="Hamilton J.P."/>
            <person name="Kanamori H."/>
            <person name="McCombie W.R."/>
            <person name="Ouyang S."/>
            <person name="Schwartz D.C."/>
            <person name="Tanaka T."/>
            <person name="Wu J."/>
            <person name="Zhou S."/>
            <person name="Childs K.L."/>
            <person name="Davidson R.M."/>
            <person name="Lin H."/>
            <person name="Quesada-Ocampo L."/>
            <person name="Vaillancourt B."/>
            <person name="Sakai H."/>
            <person name="Lee S.S."/>
            <person name="Kim J."/>
            <person name="Numa H."/>
            <person name="Itoh T."/>
            <person name="Buell C.R."/>
            <person name="Matsumoto T."/>
        </authorList>
    </citation>
    <scope>GENOME REANNOTATION</scope>
    <source>
        <strain>cv. Nipponbare</strain>
    </source>
</reference>
<reference key="6">
    <citation type="journal article" date="2003" name="Science">
        <title>Collection, mapping, and annotation of over 28,000 cDNA clones from japonica rice.</title>
        <authorList>
            <consortium name="The rice full-length cDNA consortium"/>
        </authorList>
    </citation>
    <scope>NUCLEOTIDE SEQUENCE [LARGE SCALE MRNA]</scope>
    <source>
        <strain>cv. Nipponbare</strain>
    </source>
</reference>
<sequence>MAAPREPEVIRDKAAMRAWSRRRRAEGKTVAVVPTMGYLHQGHLSLISAAAAAASADPVAIVVTIYVNPSQFAPSEDLATYPSDFAGDLRKLASTGVVDAVFNPPDLYVRGAGRRGAASGGAISCLEEAAGDGHETWVRVERLEKGMCGASRPVFFRGVATIVSKLFNIIEPDVAVFGKKDYQQWRVICRMVRDLDFAIEIIGSEIVREADGLAMSSRNVHLSREEREKALSISRSLVDARTGALKGNTDCKQIKNKIVQTLTETGGQVDYVEIVEQESLVPVEQIDGPVVICVAAWFGKVRLIDNIEIDTRS</sequence>
<evidence type="ECO:0000250" key="1"/>
<evidence type="ECO:0000305" key="2"/>
<evidence type="ECO:0000305" key="3">
    <source>
    </source>
</evidence>
<organism>
    <name type="scientific">Oryza sativa subsp. japonica</name>
    <name type="common">Rice</name>
    <dbReference type="NCBI Taxonomy" id="39947"/>
    <lineage>
        <taxon>Eukaryota</taxon>
        <taxon>Viridiplantae</taxon>
        <taxon>Streptophyta</taxon>
        <taxon>Embryophyta</taxon>
        <taxon>Tracheophyta</taxon>
        <taxon>Spermatophyta</taxon>
        <taxon>Magnoliopsida</taxon>
        <taxon>Liliopsida</taxon>
        <taxon>Poales</taxon>
        <taxon>Poaceae</taxon>
        <taxon>BOP clade</taxon>
        <taxon>Oryzoideae</taxon>
        <taxon>Oryzeae</taxon>
        <taxon>Oryzinae</taxon>
        <taxon>Oryza</taxon>
        <taxon>Oryza sativa</taxon>
    </lineage>
</organism>